<name>MFAP5_BOVIN</name>
<sequence>MTFFGPKVLLLLTALIMSSGRTPLGVSGQRGDDVTTVTSETFTEDPNLVNDPATDETVLADIQPSTDDLASLNDKNTTTECRDEKFACTRLYSVHRPIKQCLHQICFTSSRRMYVINNEICSRLVCKEHEAMKDELCRQKAGLPPRRLRRSNYFRLPPCDNVNLQGPSGL</sequence>
<keyword id="KW-0903">Direct protein sequencing</keyword>
<keyword id="KW-1015">Disulfide bond</keyword>
<keyword id="KW-0272">Extracellular matrix</keyword>
<keyword id="KW-0325">Glycoprotein</keyword>
<keyword id="KW-1185">Reference proteome</keyword>
<keyword id="KW-0964">Secreted</keyword>
<keyword id="KW-0732">Signal</keyword>
<feature type="signal peptide" evidence="3">
    <location>
        <begin position="1"/>
        <end position="20"/>
    </location>
</feature>
<feature type="chain" id="PRO_0000018684" description="Microfibrillar-associated protein 5">
    <location>
        <begin position="21"/>
        <end position="170"/>
    </location>
</feature>
<feature type="short sequence motif" description="Cell attachment site" evidence="3">
    <location>
        <begin position="30"/>
        <end position="32"/>
    </location>
</feature>
<feature type="glycosylation site" description="N-linked (GlcNAc...) asparagine" evidence="3">
    <location>
        <position position="76"/>
    </location>
</feature>
<feature type="sequence conflict" description="In Ref. 2; AAI02770." evidence="5" ref="2">
    <original>T</original>
    <variation>A</variation>
    <location>
        <position position="2"/>
    </location>
</feature>
<proteinExistence type="evidence at protein level"/>
<reference key="1">
    <citation type="journal article" date="1996" name="J. Biol. Chem.">
        <title>Further characterization of proteins associated with elastic fiber microfibrils including the molecular cloning of MAGP-2 (MP25).</title>
        <authorList>
            <person name="Gibson M.A."/>
            <person name="Hatzinikolas G."/>
            <person name="Kumaratilake J.S."/>
            <person name="Sandberg L.B."/>
            <person name="Nicholl J.K."/>
            <person name="Sutherland G.R."/>
            <person name="Cleary E.G."/>
        </authorList>
    </citation>
    <scope>NUCLEOTIDE SEQUENCE [MRNA]</scope>
    <scope>PARTIAL PROTEIN SEQUENCE</scope>
</reference>
<reference key="2">
    <citation type="submission" date="2005-08" db="EMBL/GenBank/DDBJ databases">
        <authorList>
            <consortium name="NIH - Mammalian Gene Collection (MGC) project"/>
        </authorList>
    </citation>
    <scope>NUCLEOTIDE SEQUENCE [LARGE SCALE MRNA]</scope>
    <source>
        <strain>Hereford</strain>
        <tissue>Mammary gland</tissue>
    </source>
</reference>
<reference key="3">
    <citation type="journal article" date="2004" name="J. Biol. Chem.">
        <title>MAGP-2 has multiple binding regions on fibrillins and has covalent periodic association with fibrillin-containing microfibrils.</title>
        <authorList>
            <person name="Hanssen E."/>
            <person name="Hew F.H."/>
            <person name="Moore E."/>
            <person name="Gibson M.A."/>
        </authorList>
    </citation>
    <scope>INTERACTION WITH FBN1 AND FBN2</scope>
    <scope>TISSUE SPECIFICITY</scope>
</reference>
<comment type="function">
    <text evidence="1 2">May play a role in hematopoiesis. In the cardiovascular system, could regulate growth factors or participate in cell signaling in maintaining large vessel integrity (By similarity). Component of the elastin-associated microfibrils (By similarity).</text>
</comment>
<comment type="subunit">
    <text evidence="2 4">Interacts with TGFB2 (By similarity). Interacts with BMP2 (By similarity). Interacts with FBN1 (via N-terminal domain) and FBN2 (PubMed:15131124).</text>
</comment>
<comment type="subcellular location">
    <subcellularLocation>
        <location>Secreted</location>
        <location>Extracellular space</location>
        <location>Extracellular matrix</location>
    </subcellularLocation>
</comment>
<comment type="tissue specificity">
    <text evidence="4">Associated with fibrillin-containing microfibrils of the developing nuchal ligament.</text>
</comment>
<comment type="PTM">
    <text>Forms intermolecular disulfide bonds either with other MAGP-2 molecules or with other components of the microfibrils.</text>
</comment>
<comment type="similarity">
    <text evidence="5">Belongs to the MFAP family.</text>
</comment>
<organism>
    <name type="scientific">Bos taurus</name>
    <name type="common">Bovine</name>
    <dbReference type="NCBI Taxonomy" id="9913"/>
    <lineage>
        <taxon>Eukaryota</taxon>
        <taxon>Metazoa</taxon>
        <taxon>Chordata</taxon>
        <taxon>Craniata</taxon>
        <taxon>Vertebrata</taxon>
        <taxon>Euteleostomi</taxon>
        <taxon>Mammalia</taxon>
        <taxon>Eutheria</taxon>
        <taxon>Laurasiatheria</taxon>
        <taxon>Artiodactyla</taxon>
        <taxon>Ruminantia</taxon>
        <taxon>Pecora</taxon>
        <taxon>Bovidae</taxon>
        <taxon>Bovinae</taxon>
        <taxon>Bos</taxon>
    </lineage>
</organism>
<accession>Q28022</accession>
<accession>Q3ZC93</accession>
<evidence type="ECO:0000250" key="1">
    <source>
        <dbReference type="UniProtKB" id="Q13361"/>
    </source>
</evidence>
<evidence type="ECO:0000250" key="2">
    <source>
        <dbReference type="UniProtKB" id="Q9QZJ6"/>
    </source>
</evidence>
<evidence type="ECO:0000255" key="3"/>
<evidence type="ECO:0000269" key="4">
    <source>
    </source>
</evidence>
<evidence type="ECO:0000305" key="5"/>
<dbReference type="EMBL" id="U37282">
    <property type="protein sequence ID" value="AAA96751.1"/>
    <property type="molecule type" value="mRNA"/>
</dbReference>
<dbReference type="EMBL" id="BC102769">
    <property type="protein sequence ID" value="AAI02770.1"/>
    <property type="molecule type" value="mRNA"/>
</dbReference>
<dbReference type="RefSeq" id="NP_776811.1">
    <property type="nucleotide sequence ID" value="NM_174386.2"/>
</dbReference>
<dbReference type="RefSeq" id="XP_005207104.1">
    <property type="nucleotide sequence ID" value="XM_005207047.1"/>
</dbReference>
<dbReference type="FunCoup" id="Q28022">
    <property type="interactions" value="126"/>
</dbReference>
<dbReference type="STRING" id="9913.ENSBTAP00000000398"/>
<dbReference type="GlyCosmos" id="Q28022">
    <property type="glycosylation" value="1 site, No reported glycans"/>
</dbReference>
<dbReference type="GlyGen" id="Q28022">
    <property type="glycosylation" value="1 site"/>
</dbReference>
<dbReference type="PaxDb" id="9913-ENSBTAP00000000398"/>
<dbReference type="GeneID" id="281908"/>
<dbReference type="KEGG" id="bta:281908"/>
<dbReference type="CTD" id="8076"/>
<dbReference type="eggNOG" id="ENOG502S4DY">
    <property type="taxonomic scope" value="Eukaryota"/>
</dbReference>
<dbReference type="HOGENOM" id="CLU_138028_0_0_1"/>
<dbReference type="InParanoid" id="Q28022"/>
<dbReference type="OrthoDB" id="9446021at2759"/>
<dbReference type="TreeFam" id="TF333418"/>
<dbReference type="Proteomes" id="UP000009136">
    <property type="component" value="Unplaced"/>
</dbReference>
<dbReference type="GO" id="GO:0005576">
    <property type="term" value="C:extracellular region"/>
    <property type="evidence" value="ECO:0007669"/>
    <property type="project" value="UniProtKB-KW"/>
</dbReference>
<dbReference type="GO" id="GO:0001527">
    <property type="term" value="C:microfibril"/>
    <property type="evidence" value="ECO:0000314"/>
    <property type="project" value="UniProtKB"/>
</dbReference>
<dbReference type="GO" id="GO:0060216">
    <property type="term" value="P:definitive hemopoiesis"/>
    <property type="evidence" value="ECO:0000250"/>
    <property type="project" value="UniProtKB"/>
</dbReference>
<dbReference type="GO" id="GO:0048048">
    <property type="term" value="P:embryonic eye morphogenesis"/>
    <property type="evidence" value="ECO:0000318"/>
    <property type="project" value="GO_Central"/>
</dbReference>
<dbReference type="InterPro" id="IPR008673">
    <property type="entry name" value="MAGP"/>
</dbReference>
<dbReference type="PANTHER" id="PTHR16485">
    <property type="entry name" value="MICROFIBRILLAR-ASSOCIATED PROTEIN 2"/>
    <property type="match status" value="1"/>
</dbReference>
<dbReference type="PANTHER" id="PTHR16485:SF6">
    <property type="entry name" value="MICROFIBRILLAR-ASSOCIATED PROTEIN 5"/>
    <property type="match status" value="1"/>
</dbReference>
<dbReference type="Pfam" id="PF05507">
    <property type="entry name" value="MAGP"/>
    <property type="match status" value="1"/>
</dbReference>
<protein>
    <recommendedName>
        <fullName>Microfibrillar-associated protein 5</fullName>
        <shortName>MFAP-5</shortName>
    </recommendedName>
    <alternativeName>
        <fullName>MP25</fullName>
    </alternativeName>
    <alternativeName>
        <fullName>Microfibril-associated glycoprotein 2</fullName>
        <shortName>MAGP-2</shortName>
    </alternativeName>
</protein>
<gene>
    <name type="primary">MFAP5</name>
    <name type="synonym">MAGP2</name>
</gene>